<organism>
    <name type="scientific">Acinetobacter baumannii (strain ATCC 17978 / DSM 105126 / CIP 53.77 / LMG 1025 / NCDC KC755 / 5377)</name>
    <dbReference type="NCBI Taxonomy" id="400667"/>
    <lineage>
        <taxon>Bacteria</taxon>
        <taxon>Pseudomonadati</taxon>
        <taxon>Pseudomonadota</taxon>
        <taxon>Gammaproteobacteria</taxon>
        <taxon>Moraxellales</taxon>
        <taxon>Moraxellaceae</taxon>
        <taxon>Acinetobacter</taxon>
        <taxon>Acinetobacter calcoaceticus/baumannii complex</taxon>
    </lineage>
</organism>
<proteinExistence type="inferred from homology"/>
<accession>A3MA02</accession>
<name>ALLC_ACIBT</name>
<sequence>MATLHAPAFELPEILNTKTNLADARIGAQVIECSDDFFAEAKRMLQFEAPIFVEDKFDDHGKWMDGWETRRKRHAGYDWCIVKLGVSGKISALDIDTTFFTGNYPASASLEACYAPNGDLTGAKWQSILENTELGPSQHHIFMVNNDAIFTHIRLNIFPDGGVARLRVYGDVHIQVTDHEQTLDLLALENGGRVIAYSDAHFGHPRNLINPGRGVNMGDGWETKRRRAPGYDWCILALGKSGKIEKIEIDTAHFKGNFPAEVSIQAVYLENATDAQLIPQSMFWSYLLEAQPMQMDHIHEYVNEILQYEKVSHIRINMIPDGGISRVRLWGKIAKS</sequence>
<reference key="1">
    <citation type="journal article" date="2007" name="Genes Dev.">
        <title>New insights into Acinetobacter baumannii pathogenesis revealed by high-density pyrosequencing and transposon mutagenesis.</title>
        <authorList>
            <person name="Smith M.G."/>
            <person name="Gianoulis T.A."/>
            <person name="Pukatzki S."/>
            <person name="Mekalanos J.J."/>
            <person name="Ornston L.N."/>
            <person name="Gerstein M."/>
            <person name="Snyder M."/>
        </authorList>
    </citation>
    <scope>NUCLEOTIDE SEQUENCE [LARGE SCALE GENOMIC DNA]</scope>
    <source>
        <strain>ATCC 17978 / DSM 105126 / CIP 53.77 / LMG 1025 / NCDC KC755 / 5377</strain>
    </source>
</reference>
<evidence type="ECO:0000255" key="1">
    <source>
        <dbReference type="HAMAP-Rule" id="MF_00813"/>
    </source>
</evidence>
<feature type="chain" id="PRO_1000134088" description="Probable allantoicase">
    <location>
        <begin position="1"/>
        <end position="336"/>
    </location>
</feature>
<dbReference type="EC" id="3.5.3.4" evidence="1"/>
<dbReference type="EMBL" id="CP000521">
    <property type="protein sequence ID" value="ABO13746.2"/>
    <property type="molecule type" value="Genomic_DNA"/>
</dbReference>
<dbReference type="RefSeq" id="WP_000212407.1">
    <property type="nucleotide sequence ID" value="NZ_CACVBA010000001.1"/>
</dbReference>
<dbReference type="SMR" id="A3MA02"/>
<dbReference type="KEGG" id="acb:A1S_3357"/>
<dbReference type="HOGENOM" id="CLU_038797_1_2_6"/>
<dbReference type="UniPathway" id="UPA00395">
    <property type="reaction ID" value="UER00654"/>
</dbReference>
<dbReference type="GO" id="GO:0004037">
    <property type="term" value="F:allantoicase activity"/>
    <property type="evidence" value="ECO:0007669"/>
    <property type="project" value="UniProtKB-UniRule"/>
</dbReference>
<dbReference type="GO" id="GO:0000256">
    <property type="term" value="P:allantoin catabolic process"/>
    <property type="evidence" value="ECO:0007669"/>
    <property type="project" value="UniProtKB-UniRule"/>
</dbReference>
<dbReference type="GO" id="GO:0006144">
    <property type="term" value="P:purine nucleobase metabolic process"/>
    <property type="evidence" value="ECO:0007669"/>
    <property type="project" value="UniProtKB-KW"/>
</dbReference>
<dbReference type="Gene3D" id="2.60.120.260">
    <property type="entry name" value="Galactose-binding domain-like"/>
    <property type="match status" value="2"/>
</dbReference>
<dbReference type="HAMAP" id="MF_00813">
    <property type="entry name" value="Allantoicase"/>
    <property type="match status" value="1"/>
</dbReference>
<dbReference type="InterPro" id="IPR005164">
    <property type="entry name" value="Allantoicase"/>
</dbReference>
<dbReference type="InterPro" id="IPR015908">
    <property type="entry name" value="Allantoicase_dom"/>
</dbReference>
<dbReference type="InterPro" id="IPR008979">
    <property type="entry name" value="Galactose-bd-like_sf"/>
</dbReference>
<dbReference type="NCBIfam" id="TIGR02961">
    <property type="entry name" value="allantoicase"/>
    <property type="match status" value="1"/>
</dbReference>
<dbReference type="PANTHER" id="PTHR12045">
    <property type="entry name" value="ALLANTOICASE"/>
    <property type="match status" value="1"/>
</dbReference>
<dbReference type="PANTHER" id="PTHR12045:SF3">
    <property type="entry name" value="INACTIVE ALLANTOICASE-RELATED"/>
    <property type="match status" value="1"/>
</dbReference>
<dbReference type="Pfam" id="PF03561">
    <property type="entry name" value="Allantoicase"/>
    <property type="match status" value="2"/>
</dbReference>
<dbReference type="PIRSF" id="PIRSF016516">
    <property type="entry name" value="Allantoicase"/>
    <property type="match status" value="1"/>
</dbReference>
<dbReference type="SUPFAM" id="SSF49785">
    <property type="entry name" value="Galactose-binding domain-like"/>
    <property type="match status" value="2"/>
</dbReference>
<keyword id="KW-0378">Hydrolase</keyword>
<keyword id="KW-0659">Purine metabolism</keyword>
<comment type="catalytic activity">
    <reaction evidence="1">
        <text>allantoate + H2O = (S)-ureidoglycolate + urea</text>
        <dbReference type="Rhea" id="RHEA:11016"/>
        <dbReference type="ChEBI" id="CHEBI:15377"/>
        <dbReference type="ChEBI" id="CHEBI:16199"/>
        <dbReference type="ChEBI" id="CHEBI:17536"/>
        <dbReference type="ChEBI" id="CHEBI:57296"/>
        <dbReference type="EC" id="3.5.3.4"/>
    </reaction>
</comment>
<comment type="pathway">
    <text evidence="1">Nitrogen metabolism; (S)-allantoin degradation; (S)-ureidoglycolate from allantoate (aminidohydrolase route): step 1/1.</text>
</comment>
<comment type="similarity">
    <text evidence="1">Belongs to the allantoicase family.</text>
</comment>
<protein>
    <recommendedName>
        <fullName evidence="1">Probable allantoicase</fullName>
        <ecNumber evidence="1">3.5.3.4</ecNumber>
    </recommendedName>
    <alternativeName>
        <fullName evidence="1">Allantoate amidinohydrolase</fullName>
    </alternativeName>
</protein>
<gene>
    <name evidence="1" type="primary">alc</name>
    <name type="ordered locus">A1S_3357</name>
</gene>